<sequence length="176" mass="19245">MNLPGPIHDFLLVFLGLGLILGGLGVVLLTNPIFSAFSLGLVLVCISLFYILSNSHFVAAAQLLIYVGAINVLILFAVMFMNGSEYYKDFNLWTVGNGLTSLICTSLFVLLITIISNTTWYGIIWTTRANQIIEQDLVSNGQQIGIHLSTDFFLPFEFISIILLVALIGAIATARQ</sequence>
<reference key="1">
    <citation type="journal article" date="2006" name="Science">
        <title>The genome of black cottonwood, Populus trichocarpa (Torr. &amp; Gray).</title>
        <authorList>
            <person name="Tuskan G.A."/>
            <person name="Difazio S."/>
            <person name="Jansson S."/>
            <person name="Bohlmann J."/>
            <person name="Grigoriev I."/>
            <person name="Hellsten U."/>
            <person name="Putnam N."/>
            <person name="Ralph S."/>
            <person name="Rombauts S."/>
            <person name="Salamov A."/>
            <person name="Schein J."/>
            <person name="Sterck L."/>
            <person name="Aerts A."/>
            <person name="Bhalerao R.R."/>
            <person name="Bhalerao R.P."/>
            <person name="Blaudez D."/>
            <person name="Boerjan W."/>
            <person name="Brun A."/>
            <person name="Brunner A."/>
            <person name="Busov V."/>
            <person name="Campbell M."/>
            <person name="Carlson J."/>
            <person name="Chalot M."/>
            <person name="Chapman J."/>
            <person name="Chen G.-L."/>
            <person name="Cooper D."/>
            <person name="Coutinho P.M."/>
            <person name="Couturier J."/>
            <person name="Covert S."/>
            <person name="Cronk Q."/>
            <person name="Cunningham R."/>
            <person name="Davis J."/>
            <person name="Degroeve S."/>
            <person name="Dejardin A."/>
            <person name="dePamphilis C.W."/>
            <person name="Detter J."/>
            <person name="Dirks B."/>
            <person name="Dubchak I."/>
            <person name="Duplessis S."/>
            <person name="Ehlting J."/>
            <person name="Ellis B."/>
            <person name="Gendler K."/>
            <person name="Goodstein D."/>
            <person name="Gribskov M."/>
            <person name="Grimwood J."/>
            <person name="Groover A."/>
            <person name="Gunter L."/>
            <person name="Hamberger B."/>
            <person name="Heinze B."/>
            <person name="Helariutta Y."/>
            <person name="Henrissat B."/>
            <person name="Holligan D."/>
            <person name="Holt R."/>
            <person name="Huang W."/>
            <person name="Islam-Faridi N."/>
            <person name="Jones S."/>
            <person name="Jones-Rhoades M."/>
            <person name="Jorgensen R."/>
            <person name="Joshi C."/>
            <person name="Kangasjaervi J."/>
            <person name="Karlsson J."/>
            <person name="Kelleher C."/>
            <person name="Kirkpatrick R."/>
            <person name="Kirst M."/>
            <person name="Kohler A."/>
            <person name="Kalluri U."/>
            <person name="Larimer F."/>
            <person name="Leebens-Mack J."/>
            <person name="Leple J.-C."/>
            <person name="Locascio P."/>
            <person name="Lou Y."/>
            <person name="Lucas S."/>
            <person name="Martin F."/>
            <person name="Montanini B."/>
            <person name="Napoli C."/>
            <person name="Nelson D.R."/>
            <person name="Nelson C."/>
            <person name="Nieminen K."/>
            <person name="Nilsson O."/>
            <person name="Pereda V."/>
            <person name="Peter G."/>
            <person name="Philippe R."/>
            <person name="Pilate G."/>
            <person name="Poliakov A."/>
            <person name="Razumovskaya J."/>
            <person name="Richardson P."/>
            <person name="Rinaldi C."/>
            <person name="Ritland K."/>
            <person name="Rouze P."/>
            <person name="Ryaboy D."/>
            <person name="Schmutz J."/>
            <person name="Schrader J."/>
            <person name="Segerman B."/>
            <person name="Shin H."/>
            <person name="Siddiqui A."/>
            <person name="Sterky F."/>
            <person name="Terry A."/>
            <person name="Tsai C.-J."/>
            <person name="Uberbacher E."/>
            <person name="Unneberg P."/>
            <person name="Vahala J."/>
            <person name="Wall K."/>
            <person name="Wessler S."/>
            <person name="Yang G."/>
            <person name="Yin T."/>
            <person name="Douglas C."/>
            <person name="Marra M."/>
            <person name="Sandberg G."/>
            <person name="Van de Peer Y."/>
            <person name="Rokhsar D.S."/>
        </authorList>
    </citation>
    <scope>NUCLEOTIDE SEQUENCE [LARGE SCALE GENOMIC DNA]</scope>
    <source>
        <strain>cv. Nisqually</strain>
    </source>
</reference>
<protein>
    <recommendedName>
        <fullName>NAD(P)H-quinone oxidoreductase subunit 6, chloroplastic</fullName>
        <ecNumber>7.1.1.-</ecNumber>
    </recommendedName>
    <alternativeName>
        <fullName>NAD(P)H dehydrogenase subunit 6</fullName>
    </alternativeName>
    <alternativeName>
        <fullName>NADH-plastoquinone oxidoreductase subunit 6</fullName>
    </alternativeName>
</protein>
<feature type="chain" id="PRO_0000360288" description="NAD(P)H-quinone oxidoreductase subunit 6, chloroplastic">
    <location>
        <begin position="1"/>
        <end position="176"/>
    </location>
</feature>
<feature type="transmembrane region" description="Helical" evidence="2">
    <location>
        <begin position="10"/>
        <end position="30"/>
    </location>
</feature>
<feature type="transmembrane region" description="Helical" evidence="2">
    <location>
        <begin position="32"/>
        <end position="52"/>
    </location>
</feature>
<feature type="transmembrane region" description="Helical" evidence="2">
    <location>
        <begin position="61"/>
        <end position="81"/>
    </location>
</feature>
<feature type="transmembrane region" description="Helical" evidence="2">
    <location>
        <begin position="95"/>
        <end position="115"/>
    </location>
</feature>
<feature type="transmembrane region" description="Helical" evidence="2">
    <location>
        <begin position="152"/>
        <end position="172"/>
    </location>
</feature>
<keyword id="KW-0150">Chloroplast</keyword>
<keyword id="KW-0472">Membrane</keyword>
<keyword id="KW-0520">NAD</keyword>
<keyword id="KW-0521">NADP</keyword>
<keyword id="KW-0934">Plastid</keyword>
<keyword id="KW-0618">Plastoquinone</keyword>
<keyword id="KW-0874">Quinone</keyword>
<keyword id="KW-1185">Reference proteome</keyword>
<keyword id="KW-0793">Thylakoid</keyword>
<keyword id="KW-1278">Translocase</keyword>
<keyword id="KW-0812">Transmembrane</keyword>
<keyword id="KW-1133">Transmembrane helix</keyword>
<keyword id="KW-0813">Transport</keyword>
<organism>
    <name type="scientific">Populus trichocarpa</name>
    <name type="common">Western balsam poplar</name>
    <name type="synonym">Populus balsamifera subsp. trichocarpa</name>
    <dbReference type="NCBI Taxonomy" id="3694"/>
    <lineage>
        <taxon>Eukaryota</taxon>
        <taxon>Viridiplantae</taxon>
        <taxon>Streptophyta</taxon>
        <taxon>Embryophyta</taxon>
        <taxon>Tracheophyta</taxon>
        <taxon>Spermatophyta</taxon>
        <taxon>Magnoliopsida</taxon>
        <taxon>eudicotyledons</taxon>
        <taxon>Gunneridae</taxon>
        <taxon>Pentapetalae</taxon>
        <taxon>rosids</taxon>
        <taxon>fabids</taxon>
        <taxon>Malpighiales</taxon>
        <taxon>Salicaceae</taxon>
        <taxon>Saliceae</taxon>
        <taxon>Populus</taxon>
    </lineage>
</organism>
<dbReference type="EC" id="7.1.1.-"/>
<dbReference type="EMBL" id="EF489041">
    <property type="protein sequence ID" value="ABO36764.1"/>
    <property type="molecule type" value="Genomic_DNA"/>
</dbReference>
<dbReference type="RefSeq" id="YP_001109560.1">
    <property type="nucleotide sequence ID" value="NC_009143.1"/>
</dbReference>
<dbReference type="SMR" id="A4GYW9"/>
<dbReference type="FunCoup" id="A4GYW9">
    <property type="interactions" value="14"/>
</dbReference>
<dbReference type="STRING" id="3694.A4GYW9"/>
<dbReference type="GeneID" id="4929743"/>
<dbReference type="KEGG" id="pop:4929743"/>
<dbReference type="InParanoid" id="A4GYW9"/>
<dbReference type="OrthoDB" id="1893972at2759"/>
<dbReference type="Proteomes" id="UP000006729">
    <property type="component" value="Chloroplast"/>
</dbReference>
<dbReference type="GO" id="GO:0009535">
    <property type="term" value="C:chloroplast thylakoid membrane"/>
    <property type="evidence" value="ECO:0007669"/>
    <property type="project" value="UniProtKB-SubCell"/>
</dbReference>
<dbReference type="GO" id="GO:0008137">
    <property type="term" value="F:NADH dehydrogenase (ubiquinone) activity"/>
    <property type="evidence" value="ECO:0007669"/>
    <property type="project" value="InterPro"/>
</dbReference>
<dbReference type="GO" id="GO:0048038">
    <property type="term" value="F:quinone binding"/>
    <property type="evidence" value="ECO:0007669"/>
    <property type="project" value="UniProtKB-KW"/>
</dbReference>
<dbReference type="FunFam" id="1.20.120.1200:FF:000002">
    <property type="entry name" value="NAD(P)H-quinone oxidoreductase subunit 6, chloroplastic"/>
    <property type="match status" value="1"/>
</dbReference>
<dbReference type="Gene3D" id="1.20.120.1200">
    <property type="entry name" value="NADH-ubiquinone/plastoquinone oxidoreductase chain 6, subunit NuoJ"/>
    <property type="match status" value="1"/>
</dbReference>
<dbReference type="InterPro" id="IPR050290">
    <property type="entry name" value="NAD(P)H-Q_Oxidoreduct_6"/>
</dbReference>
<dbReference type="InterPro" id="IPR001457">
    <property type="entry name" value="NADH_UbQ/plastoQ_OxRdtase_su6"/>
</dbReference>
<dbReference type="InterPro" id="IPR042106">
    <property type="entry name" value="Nuo/plastoQ_OxRdtase_6_NuoJ"/>
</dbReference>
<dbReference type="PANTHER" id="PTHR48479">
    <property type="entry name" value="NAD(P)H-QUINONE OXIDOREDUCTASE SUBUNIT 6, CHLOROPLASTIC"/>
    <property type="match status" value="1"/>
</dbReference>
<dbReference type="PANTHER" id="PTHR48479:SF1">
    <property type="entry name" value="NAD(P)H-QUINONE OXIDOREDUCTASE SUBUNIT 6, CHLOROPLASTIC"/>
    <property type="match status" value="1"/>
</dbReference>
<dbReference type="Pfam" id="PF00499">
    <property type="entry name" value="Oxidored_q3"/>
    <property type="match status" value="1"/>
</dbReference>
<name>NU6C_POPTR</name>
<geneLocation type="chloroplast"/>
<comment type="function">
    <text evidence="1">NDH shuttles electrons from NAD(P)H:plastoquinone, via FMN and iron-sulfur (Fe-S) centers, to quinones in the photosynthetic chain and possibly in a chloroplast respiratory chain. The immediate electron acceptor for the enzyme in this species is believed to be plastoquinone. Couples the redox reaction to proton translocation, and thus conserves the redox energy in a proton gradient (By similarity).</text>
</comment>
<comment type="catalytic activity">
    <reaction>
        <text>a plastoquinone + NADH + (n+1) H(+)(in) = a plastoquinol + NAD(+) + n H(+)(out)</text>
        <dbReference type="Rhea" id="RHEA:42608"/>
        <dbReference type="Rhea" id="RHEA-COMP:9561"/>
        <dbReference type="Rhea" id="RHEA-COMP:9562"/>
        <dbReference type="ChEBI" id="CHEBI:15378"/>
        <dbReference type="ChEBI" id="CHEBI:17757"/>
        <dbReference type="ChEBI" id="CHEBI:57540"/>
        <dbReference type="ChEBI" id="CHEBI:57945"/>
        <dbReference type="ChEBI" id="CHEBI:62192"/>
    </reaction>
</comment>
<comment type="catalytic activity">
    <reaction>
        <text>a plastoquinone + NADPH + (n+1) H(+)(in) = a plastoquinol + NADP(+) + n H(+)(out)</text>
        <dbReference type="Rhea" id="RHEA:42612"/>
        <dbReference type="Rhea" id="RHEA-COMP:9561"/>
        <dbReference type="Rhea" id="RHEA-COMP:9562"/>
        <dbReference type="ChEBI" id="CHEBI:15378"/>
        <dbReference type="ChEBI" id="CHEBI:17757"/>
        <dbReference type="ChEBI" id="CHEBI:57783"/>
        <dbReference type="ChEBI" id="CHEBI:58349"/>
        <dbReference type="ChEBI" id="CHEBI:62192"/>
    </reaction>
</comment>
<comment type="subunit">
    <text evidence="1">NDH is composed of at least 16 different subunits, 5 of which are encoded in the nucleus.</text>
</comment>
<comment type="subcellular location">
    <subcellularLocation>
        <location evidence="1">Plastid</location>
        <location evidence="1">Chloroplast thylakoid membrane</location>
        <topology evidence="1">Multi-pass membrane protein</topology>
    </subcellularLocation>
</comment>
<comment type="similarity">
    <text evidence="3">Belongs to the complex I subunit 6 family.</text>
</comment>
<proteinExistence type="inferred from homology"/>
<accession>A4GYW9</accession>
<gene>
    <name type="primary">ndhG</name>
    <name type="ordered locus">Poptr_cp082</name>
</gene>
<evidence type="ECO:0000250" key="1"/>
<evidence type="ECO:0000255" key="2"/>
<evidence type="ECO:0000305" key="3"/>